<accession>Q5HL19</accession>
<comment type="catalytic activity">
    <reaction evidence="1">
        <text>(S)-malate + a quinone = a quinol + oxaloacetate</text>
        <dbReference type="Rhea" id="RHEA:46012"/>
        <dbReference type="ChEBI" id="CHEBI:15589"/>
        <dbReference type="ChEBI" id="CHEBI:16452"/>
        <dbReference type="ChEBI" id="CHEBI:24646"/>
        <dbReference type="ChEBI" id="CHEBI:132124"/>
        <dbReference type="EC" id="1.1.5.4"/>
    </reaction>
</comment>
<comment type="cofactor">
    <cofactor evidence="1">
        <name>FAD</name>
        <dbReference type="ChEBI" id="CHEBI:57692"/>
    </cofactor>
</comment>
<comment type="pathway">
    <text evidence="1">Carbohydrate metabolism; tricarboxylic acid cycle; oxaloacetate from (S)-malate (quinone route): step 1/1.</text>
</comment>
<comment type="similarity">
    <text evidence="1">Belongs to the MQO family.</text>
</comment>
<gene>
    <name evidence="1" type="primary">mqo4</name>
    <name type="ordered locus">SERP2168</name>
</gene>
<protein>
    <recommendedName>
        <fullName evidence="1">Probable malate:quinone oxidoreductase 4</fullName>
        <ecNumber evidence="1">1.1.5.4</ecNumber>
    </recommendedName>
    <alternativeName>
        <fullName evidence="1">MQO 4</fullName>
    </alternativeName>
    <alternativeName>
        <fullName evidence="1">Malate dehydrogenase [quinone] 4</fullName>
    </alternativeName>
</protein>
<name>MQO4_STAEQ</name>
<sequence>MAMSDKKDVVLIGAGVLSTTFGSMLKTIAPDWDIHLYERLDRPGIESSNERNNAGTGHAALCELNYTVQQPDGSIDIEKAKEINEQFEISKQFWGHLVKSGEIQNPKEFINPLPHISFVRGKNNVKFLKDRYEAMKQFPMFDNIEYTEDIEEMRKWIPLMMKGREDKGYMAASKIDEGTDVNYGELTRKMAQNLKNSPNVEVQYKHEVVDFERLSNGKWSVKIKNLNNGQVFEHQTDYVFIGAGGGAIPLLQKTGIPESKHLGGFPISGQFIACTNPQVIEQHDAKVYGKEPPGTPPMTVPHLDTRYIDGERTLLFGPFANVGPKFLKHGSNLDLFKSIKPYNITTLLASAVKNLPLIKYSFDQVIMTKEGCMNHLRTFYPEARDEDWQVYTAGKRVQVIKDTEENGKGFIQFGTEVVNSEDHSVIALLGESPGASTSVSVALEVLEKNFPEYAKNWEPKIKKMIPSYGESLIDDVQLMRKIRKQTSKDLELGFYDKAK</sequence>
<feature type="chain" id="PRO_0000128756" description="Probable malate:quinone oxidoreductase 4">
    <location>
        <begin position="1"/>
        <end position="499"/>
    </location>
</feature>
<organism>
    <name type="scientific">Staphylococcus epidermidis (strain ATCC 35984 / DSM 28319 / BCRC 17069 / CCUG 31568 / BM 3577 / RP62A)</name>
    <dbReference type="NCBI Taxonomy" id="176279"/>
    <lineage>
        <taxon>Bacteria</taxon>
        <taxon>Bacillati</taxon>
        <taxon>Bacillota</taxon>
        <taxon>Bacilli</taxon>
        <taxon>Bacillales</taxon>
        <taxon>Staphylococcaceae</taxon>
        <taxon>Staphylococcus</taxon>
    </lineage>
</organism>
<proteinExistence type="inferred from homology"/>
<keyword id="KW-0274">FAD</keyword>
<keyword id="KW-0285">Flavoprotein</keyword>
<keyword id="KW-0560">Oxidoreductase</keyword>
<keyword id="KW-1185">Reference proteome</keyword>
<keyword id="KW-0816">Tricarboxylic acid cycle</keyword>
<evidence type="ECO:0000255" key="1">
    <source>
        <dbReference type="HAMAP-Rule" id="MF_00212"/>
    </source>
</evidence>
<dbReference type="EC" id="1.1.5.4" evidence="1"/>
<dbReference type="EMBL" id="CP000029">
    <property type="protein sequence ID" value="AAW52954.1"/>
    <property type="molecule type" value="Genomic_DNA"/>
</dbReference>
<dbReference type="SMR" id="Q5HL19"/>
<dbReference type="STRING" id="176279.SERP2168"/>
<dbReference type="KEGG" id="ser:SERP2168"/>
<dbReference type="eggNOG" id="COG0579">
    <property type="taxonomic scope" value="Bacteria"/>
</dbReference>
<dbReference type="HOGENOM" id="CLU_028151_0_0_9"/>
<dbReference type="UniPathway" id="UPA00223">
    <property type="reaction ID" value="UER01008"/>
</dbReference>
<dbReference type="Proteomes" id="UP000000531">
    <property type="component" value="Chromosome"/>
</dbReference>
<dbReference type="GO" id="GO:0047545">
    <property type="term" value="F:2-hydroxyglutarate dehydrogenase activity"/>
    <property type="evidence" value="ECO:0007669"/>
    <property type="project" value="TreeGrafter"/>
</dbReference>
<dbReference type="GO" id="GO:0008924">
    <property type="term" value="F:L-malate dehydrogenase (quinone) activity"/>
    <property type="evidence" value="ECO:0007669"/>
    <property type="project" value="UniProtKB-UniRule"/>
</dbReference>
<dbReference type="GO" id="GO:0006099">
    <property type="term" value="P:tricarboxylic acid cycle"/>
    <property type="evidence" value="ECO:0007669"/>
    <property type="project" value="UniProtKB-UniRule"/>
</dbReference>
<dbReference type="Gene3D" id="3.50.50.60">
    <property type="entry name" value="FAD/NAD(P)-binding domain"/>
    <property type="match status" value="1"/>
</dbReference>
<dbReference type="HAMAP" id="MF_00212">
    <property type="entry name" value="MQO"/>
    <property type="match status" value="1"/>
</dbReference>
<dbReference type="InterPro" id="IPR036188">
    <property type="entry name" value="FAD/NAD-bd_sf"/>
</dbReference>
<dbReference type="InterPro" id="IPR006231">
    <property type="entry name" value="MQO"/>
</dbReference>
<dbReference type="NCBIfam" id="NF040844">
    <property type="entry name" value="Lac_Quin_Ox_NO"/>
    <property type="match status" value="1"/>
</dbReference>
<dbReference type="NCBIfam" id="TIGR01320">
    <property type="entry name" value="mal_quin_oxido"/>
    <property type="match status" value="1"/>
</dbReference>
<dbReference type="NCBIfam" id="NF003604">
    <property type="entry name" value="PRK05257.1-3"/>
    <property type="match status" value="1"/>
</dbReference>
<dbReference type="NCBIfam" id="NF003606">
    <property type="entry name" value="PRK05257.2-1"/>
    <property type="match status" value="1"/>
</dbReference>
<dbReference type="NCBIfam" id="NF003611">
    <property type="entry name" value="PRK05257.3-2"/>
    <property type="match status" value="1"/>
</dbReference>
<dbReference type="NCBIfam" id="NF009875">
    <property type="entry name" value="PRK13339.1"/>
    <property type="match status" value="1"/>
</dbReference>
<dbReference type="PANTHER" id="PTHR43104">
    <property type="entry name" value="L-2-HYDROXYGLUTARATE DEHYDROGENASE, MITOCHONDRIAL"/>
    <property type="match status" value="1"/>
</dbReference>
<dbReference type="PANTHER" id="PTHR43104:SF2">
    <property type="entry name" value="L-2-HYDROXYGLUTARATE DEHYDROGENASE, MITOCHONDRIAL"/>
    <property type="match status" value="1"/>
</dbReference>
<dbReference type="Pfam" id="PF06039">
    <property type="entry name" value="Mqo"/>
    <property type="match status" value="1"/>
</dbReference>
<dbReference type="SUPFAM" id="SSF51905">
    <property type="entry name" value="FAD/NAD(P)-binding domain"/>
    <property type="match status" value="1"/>
</dbReference>
<reference key="1">
    <citation type="journal article" date="2005" name="J. Bacteriol.">
        <title>Insights on evolution of virulence and resistance from the complete genome analysis of an early methicillin-resistant Staphylococcus aureus strain and a biofilm-producing methicillin-resistant Staphylococcus epidermidis strain.</title>
        <authorList>
            <person name="Gill S.R."/>
            <person name="Fouts D.E."/>
            <person name="Archer G.L."/>
            <person name="Mongodin E.F."/>
            <person name="DeBoy R.T."/>
            <person name="Ravel J."/>
            <person name="Paulsen I.T."/>
            <person name="Kolonay J.F."/>
            <person name="Brinkac L.M."/>
            <person name="Beanan M.J."/>
            <person name="Dodson R.J."/>
            <person name="Daugherty S.C."/>
            <person name="Madupu R."/>
            <person name="Angiuoli S.V."/>
            <person name="Durkin A.S."/>
            <person name="Haft D.H."/>
            <person name="Vamathevan J.J."/>
            <person name="Khouri H."/>
            <person name="Utterback T.R."/>
            <person name="Lee C."/>
            <person name="Dimitrov G."/>
            <person name="Jiang L."/>
            <person name="Qin H."/>
            <person name="Weidman J."/>
            <person name="Tran K."/>
            <person name="Kang K.H."/>
            <person name="Hance I.R."/>
            <person name="Nelson K.E."/>
            <person name="Fraser C.M."/>
        </authorList>
    </citation>
    <scope>NUCLEOTIDE SEQUENCE [LARGE SCALE GENOMIC DNA]</scope>
    <source>
        <strain>ATCC 35984 / DSM 28319 / BCRC 17069 / CCUG 31568 / BM 3577 / RP62A</strain>
    </source>
</reference>